<organism>
    <name type="scientific">Shewanella woodyi (strain ATCC 51908 / MS32)</name>
    <dbReference type="NCBI Taxonomy" id="392500"/>
    <lineage>
        <taxon>Bacteria</taxon>
        <taxon>Pseudomonadati</taxon>
        <taxon>Pseudomonadota</taxon>
        <taxon>Gammaproteobacteria</taxon>
        <taxon>Alteromonadales</taxon>
        <taxon>Shewanellaceae</taxon>
        <taxon>Shewanella</taxon>
    </lineage>
</organism>
<dbReference type="EC" id="1.2.1.41" evidence="1"/>
<dbReference type="EMBL" id="CP000961">
    <property type="protein sequence ID" value="ACA87862.1"/>
    <property type="molecule type" value="Genomic_DNA"/>
</dbReference>
<dbReference type="RefSeq" id="WP_012326195.1">
    <property type="nucleotide sequence ID" value="NC_010506.1"/>
</dbReference>
<dbReference type="SMR" id="B1KD27"/>
<dbReference type="STRING" id="392500.Swoo_3598"/>
<dbReference type="KEGG" id="swd:Swoo_3598"/>
<dbReference type="eggNOG" id="COG0014">
    <property type="taxonomic scope" value="Bacteria"/>
</dbReference>
<dbReference type="HOGENOM" id="CLU_030231_0_0_6"/>
<dbReference type="UniPathway" id="UPA00098">
    <property type="reaction ID" value="UER00360"/>
</dbReference>
<dbReference type="Proteomes" id="UP000002168">
    <property type="component" value="Chromosome"/>
</dbReference>
<dbReference type="GO" id="GO:0005737">
    <property type="term" value="C:cytoplasm"/>
    <property type="evidence" value="ECO:0007669"/>
    <property type="project" value="UniProtKB-SubCell"/>
</dbReference>
<dbReference type="GO" id="GO:0004350">
    <property type="term" value="F:glutamate-5-semialdehyde dehydrogenase activity"/>
    <property type="evidence" value="ECO:0007669"/>
    <property type="project" value="UniProtKB-UniRule"/>
</dbReference>
<dbReference type="GO" id="GO:0050661">
    <property type="term" value="F:NADP binding"/>
    <property type="evidence" value="ECO:0007669"/>
    <property type="project" value="InterPro"/>
</dbReference>
<dbReference type="GO" id="GO:0055129">
    <property type="term" value="P:L-proline biosynthetic process"/>
    <property type="evidence" value="ECO:0007669"/>
    <property type="project" value="UniProtKB-UniRule"/>
</dbReference>
<dbReference type="CDD" id="cd07079">
    <property type="entry name" value="ALDH_F18-19_ProA-GPR"/>
    <property type="match status" value="1"/>
</dbReference>
<dbReference type="FunFam" id="3.40.309.10:FF:000006">
    <property type="entry name" value="Gamma-glutamyl phosphate reductase"/>
    <property type="match status" value="1"/>
</dbReference>
<dbReference type="Gene3D" id="3.40.605.10">
    <property type="entry name" value="Aldehyde Dehydrogenase, Chain A, domain 1"/>
    <property type="match status" value="1"/>
</dbReference>
<dbReference type="Gene3D" id="3.40.309.10">
    <property type="entry name" value="Aldehyde Dehydrogenase, Chain A, domain 2"/>
    <property type="match status" value="1"/>
</dbReference>
<dbReference type="HAMAP" id="MF_00412">
    <property type="entry name" value="ProA"/>
    <property type="match status" value="1"/>
</dbReference>
<dbReference type="InterPro" id="IPR016161">
    <property type="entry name" value="Ald_DH/histidinol_DH"/>
</dbReference>
<dbReference type="InterPro" id="IPR016163">
    <property type="entry name" value="Ald_DH_C"/>
</dbReference>
<dbReference type="InterPro" id="IPR016162">
    <property type="entry name" value="Ald_DH_N"/>
</dbReference>
<dbReference type="InterPro" id="IPR015590">
    <property type="entry name" value="Aldehyde_DH_dom"/>
</dbReference>
<dbReference type="InterPro" id="IPR020593">
    <property type="entry name" value="G-glutamylP_reductase_CS"/>
</dbReference>
<dbReference type="InterPro" id="IPR012134">
    <property type="entry name" value="Glu-5-SA_DH"/>
</dbReference>
<dbReference type="InterPro" id="IPR000965">
    <property type="entry name" value="GPR_dom"/>
</dbReference>
<dbReference type="NCBIfam" id="NF001221">
    <property type="entry name" value="PRK00197.1"/>
    <property type="match status" value="1"/>
</dbReference>
<dbReference type="NCBIfam" id="TIGR00407">
    <property type="entry name" value="proA"/>
    <property type="match status" value="1"/>
</dbReference>
<dbReference type="PANTHER" id="PTHR11063:SF8">
    <property type="entry name" value="DELTA-1-PYRROLINE-5-CARBOXYLATE SYNTHASE"/>
    <property type="match status" value="1"/>
</dbReference>
<dbReference type="PANTHER" id="PTHR11063">
    <property type="entry name" value="GLUTAMATE SEMIALDEHYDE DEHYDROGENASE"/>
    <property type="match status" value="1"/>
</dbReference>
<dbReference type="Pfam" id="PF00171">
    <property type="entry name" value="Aldedh"/>
    <property type="match status" value="1"/>
</dbReference>
<dbReference type="PIRSF" id="PIRSF000151">
    <property type="entry name" value="GPR"/>
    <property type="match status" value="1"/>
</dbReference>
<dbReference type="SUPFAM" id="SSF53720">
    <property type="entry name" value="ALDH-like"/>
    <property type="match status" value="1"/>
</dbReference>
<dbReference type="PROSITE" id="PS01223">
    <property type="entry name" value="PROA"/>
    <property type="match status" value="1"/>
</dbReference>
<evidence type="ECO:0000255" key="1">
    <source>
        <dbReference type="HAMAP-Rule" id="MF_00412"/>
    </source>
</evidence>
<feature type="chain" id="PRO_0000340919" description="Gamma-glutamyl phosphate reductase">
    <location>
        <begin position="1"/>
        <end position="424"/>
    </location>
</feature>
<proteinExistence type="inferred from homology"/>
<reference key="1">
    <citation type="submission" date="2008-02" db="EMBL/GenBank/DDBJ databases">
        <title>Complete sequence of Shewanella woodyi ATCC 51908.</title>
        <authorList>
            <consortium name="US DOE Joint Genome Institute"/>
            <person name="Copeland A."/>
            <person name="Lucas S."/>
            <person name="Lapidus A."/>
            <person name="Glavina del Rio T."/>
            <person name="Dalin E."/>
            <person name="Tice H."/>
            <person name="Bruce D."/>
            <person name="Goodwin L."/>
            <person name="Pitluck S."/>
            <person name="Sims D."/>
            <person name="Brettin T."/>
            <person name="Detter J.C."/>
            <person name="Han C."/>
            <person name="Kuske C.R."/>
            <person name="Schmutz J."/>
            <person name="Larimer F."/>
            <person name="Land M."/>
            <person name="Hauser L."/>
            <person name="Kyrpides N."/>
            <person name="Lykidis A."/>
            <person name="Zhao J.-S."/>
            <person name="Richardson P."/>
        </authorList>
    </citation>
    <scope>NUCLEOTIDE SEQUENCE [LARGE SCALE GENOMIC DNA]</scope>
    <source>
        <strain>ATCC 51908 / MS32</strain>
    </source>
</reference>
<keyword id="KW-0028">Amino-acid biosynthesis</keyword>
<keyword id="KW-0963">Cytoplasm</keyword>
<keyword id="KW-0521">NADP</keyword>
<keyword id="KW-0560">Oxidoreductase</keyword>
<keyword id="KW-0641">Proline biosynthesis</keyword>
<keyword id="KW-1185">Reference proteome</keyword>
<comment type="function">
    <text evidence="1">Catalyzes the NADPH-dependent reduction of L-glutamate 5-phosphate into L-glutamate 5-semialdehyde and phosphate. The product spontaneously undergoes cyclization to form 1-pyrroline-5-carboxylate.</text>
</comment>
<comment type="catalytic activity">
    <reaction evidence="1">
        <text>L-glutamate 5-semialdehyde + phosphate + NADP(+) = L-glutamyl 5-phosphate + NADPH + H(+)</text>
        <dbReference type="Rhea" id="RHEA:19541"/>
        <dbReference type="ChEBI" id="CHEBI:15378"/>
        <dbReference type="ChEBI" id="CHEBI:43474"/>
        <dbReference type="ChEBI" id="CHEBI:57783"/>
        <dbReference type="ChEBI" id="CHEBI:58066"/>
        <dbReference type="ChEBI" id="CHEBI:58274"/>
        <dbReference type="ChEBI" id="CHEBI:58349"/>
        <dbReference type="EC" id="1.2.1.41"/>
    </reaction>
</comment>
<comment type="pathway">
    <text evidence="1">Amino-acid biosynthesis; L-proline biosynthesis; L-glutamate 5-semialdehyde from L-glutamate: step 2/2.</text>
</comment>
<comment type="subcellular location">
    <subcellularLocation>
        <location evidence="1">Cytoplasm</location>
    </subcellularLocation>
</comment>
<comment type="similarity">
    <text evidence="1">Belongs to the gamma-glutamyl phosphate reductase family.</text>
</comment>
<accession>B1KD27</accession>
<name>PROA_SHEWM</name>
<protein>
    <recommendedName>
        <fullName evidence="1">Gamma-glutamyl phosphate reductase</fullName>
        <shortName evidence="1">GPR</shortName>
        <ecNumber evidence="1">1.2.1.41</ecNumber>
    </recommendedName>
    <alternativeName>
        <fullName evidence="1">Glutamate-5-semialdehyde dehydrogenase</fullName>
    </alternativeName>
    <alternativeName>
        <fullName evidence="1">Glutamyl-gamma-semialdehyde dehydrogenase</fullName>
        <shortName evidence="1">GSA dehydrogenase</shortName>
    </alternativeName>
</protein>
<gene>
    <name evidence="1" type="primary">proA</name>
    <name type="ordered locus">Swoo_3598</name>
</gene>
<sequence>MIENNELYLQTLGQNAKQASYGLASLTGTQKKALLSAIAASLTAKSQAILAANQKDVAAARENGLSEAMIDRLLLDDARLKGVISDIDNVISLNDPVGTELESQLLDNGLRLSRRRVPLGVIGVIYEARPNVTVDIAVLALKTGNAVILRGGKETLNSNMALSEAIREAITEQGLAADSVQLIKSPDRTLVSGLLKLDQFVDMIVPRGGQNLQRLCAEQATIPVILGGIGICHLYMDKDANIAKSIEVIANAKVQRPTVCNALDTVLIHDSLAETALPQLFSNLSAQGVSFYGCEQTKAIADKLGLAISTATDETYGQEWLSLTLGIKVVADIDTAIGHIRRYSSGHSEGILTDNIHASAHFINQVDSAAVYVNASTRFTDGGQFGLGAEVAVSTQKLHARGPMGLEALTTYKWIGLGEYTVRG</sequence>